<reference key="1">
    <citation type="journal article" date="2003" name="Proc. Natl. Acad. Sci. U.S.A.">
        <title>The complete genome sequence of Chromobacterium violaceum reveals remarkable and exploitable bacterial adaptability.</title>
        <authorList>
            <person name="Vasconcelos A.T.R."/>
            <person name="de Almeida D.F."/>
            <person name="Hungria M."/>
            <person name="Guimaraes C.T."/>
            <person name="Antonio R.V."/>
            <person name="Almeida F.C."/>
            <person name="de Almeida L.G.P."/>
            <person name="de Almeida R."/>
            <person name="Alves-Gomes J.A."/>
            <person name="Andrade E.M."/>
            <person name="Araripe J."/>
            <person name="de Araujo M.F.F."/>
            <person name="Astolfi-Filho S."/>
            <person name="Azevedo V."/>
            <person name="Baptista A.J."/>
            <person name="Bataus L.A.M."/>
            <person name="Batista J.S."/>
            <person name="Belo A."/>
            <person name="van den Berg C."/>
            <person name="Bogo M."/>
            <person name="Bonatto S."/>
            <person name="Bordignon J."/>
            <person name="Brigido M.M."/>
            <person name="Brito C.A."/>
            <person name="Brocchi M."/>
            <person name="Burity H.A."/>
            <person name="Camargo A.A."/>
            <person name="Cardoso D.D.P."/>
            <person name="Carneiro N.P."/>
            <person name="Carraro D.M."/>
            <person name="Carvalho C.M.B."/>
            <person name="Cascardo J.C.M."/>
            <person name="Cavada B.S."/>
            <person name="Chueire L.M.O."/>
            <person name="Creczynski-Pasa T.B."/>
            <person name="Cunha-Junior N.C."/>
            <person name="Fagundes N."/>
            <person name="Falcao C.L."/>
            <person name="Fantinatti F."/>
            <person name="Farias I.P."/>
            <person name="Felipe M.S.S."/>
            <person name="Ferrari L.P."/>
            <person name="Ferro J.A."/>
            <person name="Ferro M.I.T."/>
            <person name="Franco G.R."/>
            <person name="Freitas N.S.A."/>
            <person name="Furlan L.R."/>
            <person name="Gazzinelli R.T."/>
            <person name="Gomes E.A."/>
            <person name="Goncalves P.R."/>
            <person name="Grangeiro T.B."/>
            <person name="Grattapaglia D."/>
            <person name="Grisard E.C."/>
            <person name="Hanna E.S."/>
            <person name="Jardim S.N."/>
            <person name="Laurino J."/>
            <person name="Leoi L.C.T."/>
            <person name="Lima L.F.A."/>
            <person name="Loureiro M.F."/>
            <person name="Lyra M.C.C.P."/>
            <person name="Madeira H.M.F."/>
            <person name="Manfio G.P."/>
            <person name="Maranhao A.Q."/>
            <person name="Martins W.S."/>
            <person name="di Mauro S.M.Z."/>
            <person name="de Medeiros S.R.B."/>
            <person name="Meissner R.V."/>
            <person name="Moreira M.A.M."/>
            <person name="Nascimento F.F."/>
            <person name="Nicolas M.F."/>
            <person name="Oliveira J.G."/>
            <person name="Oliveira S.C."/>
            <person name="Paixao R.F.C."/>
            <person name="Parente J.A."/>
            <person name="Pedrosa F.O."/>
            <person name="Pena S.D.J."/>
            <person name="Pereira J.O."/>
            <person name="Pereira M."/>
            <person name="Pinto L.S.R.C."/>
            <person name="Pinto L.S."/>
            <person name="Porto J.I.R."/>
            <person name="Potrich D.P."/>
            <person name="Ramalho-Neto C.E."/>
            <person name="Reis A.M.M."/>
            <person name="Rigo L.U."/>
            <person name="Rondinelli E."/>
            <person name="Santos E.B.P."/>
            <person name="Santos F.R."/>
            <person name="Schneider M.P.C."/>
            <person name="Seuanez H.N."/>
            <person name="Silva A.M.R."/>
            <person name="da Silva A.L.C."/>
            <person name="Silva D.W."/>
            <person name="Silva R."/>
            <person name="Simoes I.C."/>
            <person name="Simon D."/>
            <person name="Soares C.M.A."/>
            <person name="Soares R.B.A."/>
            <person name="Souza E.M."/>
            <person name="Souza K.R.L."/>
            <person name="Souza R.C."/>
            <person name="Steffens M.B.R."/>
            <person name="Steindel M."/>
            <person name="Teixeira S.R."/>
            <person name="Urmenyi T."/>
            <person name="Vettore A."/>
            <person name="Wassem R."/>
            <person name="Zaha A."/>
            <person name="Simpson A.J.G."/>
        </authorList>
    </citation>
    <scope>NUCLEOTIDE SEQUENCE [LARGE SCALE GENOMIC DNA]</scope>
    <source>
        <strain>ATCC 12472 / DSM 30191 / JCM 1249 / CCUG 213 / NBRC 12614 / NCIMB 9131 / NCTC 9757 / MK</strain>
    </source>
</reference>
<gene>
    <name evidence="1" type="primary">ttcA</name>
    <name type="ordered locus">CV_4131</name>
</gene>
<evidence type="ECO:0000255" key="1">
    <source>
        <dbReference type="HAMAP-Rule" id="MF_01850"/>
    </source>
</evidence>
<evidence type="ECO:0000256" key="2">
    <source>
        <dbReference type="SAM" id="MobiDB-lite"/>
    </source>
</evidence>
<accession>Q7NQK6</accession>
<name>TTCA_CHRVO</name>
<proteinExistence type="inferred from homology"/>
<sequence>MNAALDDKAAKKAAFEGNKLAKRLRHHVGDAINDFNMIEEGDRVMVCLSGGKDSYTLLDILRGLQKSAPINFSIVAVNLDQKQPGFPEHVLPEYLKSIGVEYRIVEEDTYSIVKRLVPEGKTTCSLCSRLRRGILYRVADELGATKIALGHHRDDILHTLFLNMFYGGKMKAMPPKLVSDDGRHMVIRPLAYCREKDIIRYADWKAFPIIPCNLCGSQPNLQRQVVKEMVNDWDKRFPGRVESMFRALQNVVPSHLADPKLFDFVGLQTGDAPFADGDTAFDKEEFRDPAPDADDVEDAPKKRTISILDSRGKESGCGA</sequence>
<keyword id="KW-0004">4Fe-4S</keyword>
<keyword id="KW-0067">ATP-binding</keyword>
<keyword id="KW-0963">Cytoplasm</keyword>
<keyword id="KW-0408">Iron</keyword>
<keyword id="KW-0411">Iron-sulfur</keyword>
<keyword id="KW-0460">Magnesium</keyword>
<keyword id="KW-0479">Metal-binding</keyword>
<keyword id="KW-0547">Nucleotide-binding</keyword>
<keyword id="KW-1185">Reference proteome</keyword>
<keyword id="KW-0694">RNA-binding</keyword>
<keyword id="KW-0808">Transferase</keyword>
<keyword id="KW-0819">tRNA processing</keyword>
<keyword id="KW-0820">tRNA-binding</keyword>
<feature type="chain" id="PRO_0000348699" description="tRNA-cytidine(32) 2-sulfurtransferase">
    <location>
        <begin position="1"/>
        <end position="319"/>
    </location>
</feature>
<feature type="region of interest" description="Disordered" evidence="2">
    <location>
        <begin position="276"/>
        <end position="319"/>
    </location>
</feature>
<feature type="short sequence motif" description="PP-loop motif" evidence="1">
    <location>
        <begin position="49"/>
        <end position="54"/>
    </location>
</feature>
<feature type="compositionally biased region" description="Basic and acidic residues" evidence="2">
    <location>
        <begin position="280"/>
        <end position="290"/>
    </location>
</feature>
<feature type="compositionally biased region" description="Basic and acidic residues" evidence="2">
    <location>
        <begin position="310"/>
        <end position="319"/>
    </location>
</feature>
<feature type="binding site" evidence="1">
    <location>
        <position position="124"/>
    </location>
    <ligand>
        <name>[4Fe-4S] cluster</name>
        <dbReference type="ChEBI" id="CHEBI:49883"/>
    </ligand>
</feature>
<feature type="binding site" evidence="1">
    <location>
        <position position="127"/>
    </location>
    <ligand>
        <name>[4Fe-4S] cluster</name>
        <dbReference type="ChEBI" id="CHEBI:49883"/>
    </ligand>
</feature>
<feature type="binding site" evidence="1">
    <location>
        <position position="215"/>
    </location>
    <ligand>
        <name>[4Fe-4S] cluster</name>
        <dbReference type="ChEBI" id="CHEBI:49883"/>
    </ligand>
</feature>
<comment type="function">
    <text evidence="1">Catalyzes the ATP-dependent 2-thiolation of cytidine in position 32 of tRNA, to form 2-thiocytidine (s(2)C32). The sulfur atoms are provided by the cysteine/cysteine desulfurase (IscS) system.</text>
</comment>
<comment type="catalytic activity">
    <reaction evidence="1">
        <text>cytidine(32) in tRNA + S-sulfanyl-L-cysteinyl-[cysteine desulfurase] + AH2 + ATP = 2-thiocytidine(32) in tRNA + L-cysteinyl-[cysteine desulfurase] + A + AMP + diphosphate + H(+)</text>
        <dbReference type="Rhea" id="RHEA:57048"/>
        <dbReference type="Rhea" id="RHEA-COMP:10288"/>
        <dbReference type="Rhea" id="RHEA-COMP:12157"/>
        <dbReference type="Rhea" id="RHEA-COMP:12158"/>
        <dbReference type="Rhea" id="RHEA-COMP:14821"/>
        <dbReference type="ChEBI" id="CHEBI:13193"/>
        <dbReference type="ChEBI" id="CHEBI:15378"/>
        <dbReference type="ChEBI" id="CHEBI:17499"/>
        <dbReference type="ChEBI" id="CHEBI:29950"/>
        <dbReference type="ChEBI" id="CHEBI:30616"/>
        <dbReference type="ChEBI" id="CHEBI:33019"/>
        <dbReference type="ChEBI" id="CHEBI:61963"/>
        <dbReference type="ChEBI" id="CHEBI:82748"/>
        <dbReference type="ChEBI" id="CHEBI:141453"/>
        <dbReference type="ChEBI" id="CHEBI:456215"/>
    </reaction>
    <physiologicalReaction direction="left-to-right" evidence="1">
        <dbReference type="Rhea" id="RHEA:57049"/>
    </physiologicalReaction>
</comment>
<comment type="cofactor">
    <cofactor evidence="1">
        <name>Mg(2+)</name>
        <dbReference type="ChEBI" id="CHEBI:18420"/>
    </cofactor>
</comment>
<comment type="cofactor">
    <cofactor evidence="1">
        <name>[4Fe-4S] cluster</name>
        <dbReference type="ChEBI" id="CHEBI:49883"/>
    </cofactor>
    <text evidence="1">Binds 1 [4Fe-4S] cluster per subunit. The cluster is chelated by three Cys residues, the fourth Fe has a free coordination site that may bind a sulfur atom transferred from the persulfide of IscS.</text>
</comment>
<comment type="pathway">
    <text evidence="1">tRNA modification.</text>
</comment>
<comment type="subunit">
    <text evidence="1">Homodimer.</text>
</comment>
<comment type="subcellular location">
    <subcellularLocation>
        <location evidence="1">Cytoplasm</location>
    </subcellularLocation>
</comment>
<comment type="miscellaneous">
    <text evidence="1">The thiolation reaction likely consists of two steps: a first activation step by ATP to form an adenylated intermediate of the target base of tRNA, and a second nucleophilic substitution step of the sulfur (S) atom supplied by the hydrosulfide attached to the Fe-S cluster.</text>
</comment>
<comment type="similarity">
    <text evidence="1">Belongs to the TtcA family.</text>
</comment>
<organism>
    <name type="scientific">Chromobacterium violaceum (strain ATCC 12472 / DSM 30191 / JCM 1249 / CCUG 213 / NBRC 12614 / NCIMB 9131 / NCTC 9757 / MK)</name>
    <dbReference type="NCBI Taxonomy" id="243365"/>
    <lineage>
        <taxon>Bacteria</taxon>
        <taxon>Pseudomonadati</taxon>
        <taxon>Pseudomonadota</taxon>
        <taxon>Betaproteobacteria</taxon>
        <taxon>Neisseriales</taxon>
        <taxon>Chromobacteriaceae</taxon>
        <taxon>Chromobacterium</taxon>
    </lineage>
</organism>
<protein>
    <recommendedName>
        <fullName evidence="1">tRNA-cytidine(32) 2-sulfurtransferase</fullName>
        <ecNumber evidence="1">2.8.1.-</ecNumber>
    </recommendedName>
    <alternativeName>
        <fullName evidence="1">Two-thiocytidine biosynthesis protein A</fullName>
    </alternativeName>
    <alternativeName>
        <fullName evidence="1">tRNA 2-thiocytidine biosynthesis protein TtcA</fullName>
    </alternativeName>
</protein>
<dbReference type="EC" id="2.8.1.-" evidence="1"/>
<dbReference type="EMBL" id="AE016825">
    <property type="protein sequence ID" value="AAQ61792.1"/>
    <property type="molecule type" value="Genomic_DNA"/>
</dbReference>
<dbReference type="SMR" id="Q7NQK6"/>
<dbReference type="STRING" id="243365.CV_4131"/>
<dbReference type="KEGG" id="cvi:CV_4131"/>
<dbReference type="eggNOG" id="COG0037">
    <property type="taxonomic scope" value="Bacteria"/>
</dbReference>
<dbReference type="HOGENOM" id="CLU_026481_0_0_4"/>
<dbReference type="Proteomes" id="UP000001424">
    <property type="component" value="Chromosome"/>
</dbReference>
<dbReference type="GO" id="GO:0005737">
    <property type="term" value="C:cytoplasm"/>
    <property type="evidence" value="ECO:0007669"/>
    <property type="project" value="UniProtKB-SubCell"/>
</dbReference>
<dbReference type="GO" id="GO:0051539">
    <property type="term" value="F:4 iron, 4 sulfur cluster binding"/>
    <property type="evidence" value="ECO:0007669"/>
    <property type="project" value="UniProtKB-UniRule"/>
</dbReference>
<dbReference type="GO" id="GO:0005524">
    <property type="term" value="F:ATP binding"/>
    <property type="evidence" value="ECO:0007669"/>
    <property type="project" value="UniProtKB-UniRule"/>
</dbReference>
<dbReference type="GO" id="GO:0000287">
    <property type="term" value="F:magnesium ion binding"/>
    <property type="evidence" value="ECO:0007669"/>
    <property type="project" value="UniProtKB-UniRule"/>
</dbReference>
<dbReference type="GO" id="GO:0016783">
    <property type="term" value="F:sulfurtransferase activity"/>
    <property type="evidence" value="ECO:0007669"/>
    <property type="project" value="UniProtKB-UniRule"/>
</dbReference>
<dbReference type="GO" id="GO:0000049">
    <property type="term" value="F:tRNA binding"/>
    <property type="evidence" value="ECO:0007669"/>
    <property type="project" value="UniProtKB-KW"/>
</dbReference>
<dbReference type="GO" id="GO:0034227">
    <property type="term" value="P:tRNA thio-modification"/>
    <property type="evidence" value="ECO:0007669"/>
    <property type="project" value="UniProtKB-UniRule"/>
</dbReference>
<dbReference type="CDD" id="cd24138">
    <property type="entry name" value="TtcA-like"/>
    <property type="match status" value="1"/>
</dbReference>
<dbReference type="Gene3D" id="3.40.50.620">
    <property type="entry name" value="HUPs"/>
    <property type="match status" value="1"/>
</dbReference>
<dbReference type="HAMAP" id="MF_01850">
    <property type="entry name" value="TtcA"/>
    <property type="match status" value="1"/>
</dbReference>
<dbReference type="InterPro" id="IPR014729">
    <property type="entry name" value="Rossmann-like_a/b/a_fold"/>
</dbReference>
<dbReference type="InterPro" id="IPR011063">
    <property type="entry name" value="TilS/TtcA_N"/>
</dbReference>
<dbReference type="InterPro" id="IPR012089">
    <property type="entry name" value="tRNA_Cyd_32_2_STrfase"/>
</dbReference>
<dbReference type="NCBIfam" id="NF007972">
    <property type="entry name" value="PRK10696.1"/>
    <property type="match status" value="1"/>
</dbReference>
<dbReference type="PANTHER" id="PTHR43686:SF1">
    <property type="entry name" value="AMINOTRAN_5 DOMAIN-CONTAINING PROTEIN"/>
    <property type="match status" value="1"/>
</dbReference>
<dbReference type="PANTHER" id="PTHR43686">
    <property type="entry name" value="SULFURTRANSFERASE-RELATED"/>
    <property type="match status" value="1"/>
</dbReference>
<dbReference type="Pfam" id="PF01171">
    <property type="entry name" value="ATP_bind_3"/>
    <property type="match status" value="1"/>
</dbReference>
<dbReference type="SUPFAM" id="SSF52402">
    <property type="entry name" value="Adenine nucleotide alpha hydrolases-like"/>
    <property type="match status" value="1"/>
</dbReference>